<accession>Q2P2C1</accession>
<comment type="function">
    <text evidence="1">Involved in peptide bond synthesis. Alleviates ribosome stalling that occurs when 3 or more consecutive Pro residues or the sequence PPG is present in a protein, possibly by augmenting the peptidyl transferase activity of the ribosome. Modification of Lys-34 is required for alleviation.</text>
</comment>
<comment type="pathway">
    <text evidence="1">Protein biosynthesis; polypeptide chain elongation.</text>
</comment>
<comment type="subcellular location">
    <subcellularLocation>
        <location evidence="1">Cytoplasm</location>
    </subcellularLocation>
</comment>
<comment type="PTM">
    <text evidence="1">May be beta-lysylated on the epsilon-amino group of Lys-34 by the combined action of EpmA and EpmB, and then hydroxylated on the C5 position of the same residue by EpmC (if this protein is present). Lysylation is critical for the stimulatory effect of EF-P on peptide-bond formation. The lysylation moiety may extend toward the peptidyltransferase center and stabilize the terminal 3-CCA end of the tRNA. Hydroxylation of the C5 position on Lys-34 may allow additional potential stabilizing hydrogen-bond interactions with the P-tRNA.</text>
</comment>
<comment type="similarity">
    <text evidence="1">Belongs to the elongation factor P family.</text>
</comment>
<protein>
    <recommendedName>
        <fullName evidence="1">Elongation factor P</fullName>
        <shortName evidence="1">EF-P</shortName>
    </recommendedName>
</protein>
<keyword id="KW-0963">Cytoplasm</keyword>
<keyword id="KW-0251">Elongation factor</keyword>
<keyword id="KW-0379">Hydroxylation</keyword>
<keyword id="KW-0648">Protein biosynthesis</keyword>
<dbReference type="EMBL" id="AP008229">
    <property type="protein sequence ID" value="BAE69306.1"/>
    <property type="molecule type" value="Genomic_DNA"/>
</dbReference>
<dbReference type="RefSeq" id="WP_002802373.1">
    <property type="nucleotide sequence ID" value="NC_007705.1"/>
</dbReference>
<dbReference type="SMR" id="Q2P2C1"/>
<dbReference type="GeneID" id="75153817"/>
<dbReference type="KEGG" id="xom:XOO2551"/>
<dbReference type="HOGENOM" id="CLU_074944_0_0_6"/>
<dbReference type="UniPathway" id="UPA00345"/>
<dbReference type="GO" id="GO:0005737">
    <property type="term" value="C:cytoplasm"/>
    <property type="evidence" value="ECO:0007669"/>
    <property type="project" value="UniProtKB-SubCell"/>
</dbReference>
<dbReference type="GO" id="GO:0003746">
    <property type="term" value="F:translation elongation factor activity"/>
    <property type="evidence" value="ECO:0007669"/>
    <property type="project" value="UniProtKB-UniRule"/>
</dbReference>
<dbReference type="GO" id="GO:0043043">
    <property type="term" value="P:peptide biosynthetic process"/>
    <property type="evidence" value="ECO:0007669"/>
    <property type="project" value="InterPro"/>
</dbReference>
<dbReference type="CDD" id="cd04470">
    <property type="entry name" value="S1_EF-P_repeat_1"/>
    <property type="match status" value="1"/>
</dbReference>
<dbReference type="CDD" id="cd05794">
    <property type="entry name" value="S1_EF-P_repeat_2"/>
    <property type="match status" value="1"/>
</dbReference>
<dbReference type="FunFam" id="2.30.30.30:FF:000039">
    <property type="entry name" value="Elongation factor P"/>
    <property type="match status" value="1"/>
</dbReference>
<dbReference type="FunFam" id="2.40.50.140:FF:000004">
    <property type="entry name" value="Elongation factor P"/>
    <property type="match status" value="1"/>
</dbReference>
<dbReference type="FunFam" id="2.40.50.140:FF:000009">
    <property type="entry name" value="Elongation factor P"/>
    <property type="match status" value="1"/>
</dbReference>
<dbReference type="Gene3D" id="2.30.30.30">
    <property type="match status" value="1"/>
</dbReference>
<dbReference type="Gene3D" id="2.40.50.140">
    <property type="entry name" value="Nucleic acid-binding proteins"/>
    <property type="match status" value="2"/>
</dbReference>
<dbReference type="HAMAP" id="MF_00141">
    <property type="entry name" value="EF_P"/>
    <property type="match status" value="1"/>
</dbReference>
<dbReference type="InterPro" id="IPR015365">
    <property type="entry name" value="Elong-fact-P_C"/>
</dbReference>
<dbReference type="InterPro" id="IPR012340">
    <property type="entry name" value="NA-bd_OB-fold"/>
</dbReference>
<dbReference type="InterPro" id="IPR014722">
    <property type="entry name" value="Rib_uL2_dom2"/>
</dbReference>
<dbReference type="InterPro" id="IPR020599">
    <property type="entry name" value="Transl_elong_fac_P/YeiP"/>
</dbReference>
<dbReference type="InterPro" id="IPR013185">
    <property type="entry name" value="Transl_elong_KOW-like"/>
</dbReference>
<dbReference type="InterPro" id="IPR001059">
    <property type="entry name" value="Transl_elong_P/YeiP_cen"/>
</dbReference>
<dbReference type="InterPro" id="IPR013852">
    <property type="entry name" value="Transl_elong_P/YeiP_CS"/>
</dbReference>
<dbReference type="InterPro" id="IPR011768">
    <property type="entry name" value="Transl_elongation_fac_P"/>
</dbReference>
<dbReference type="InterPro" id="IPR008991">
    <property type="entry name" value="Translation_prot_SH3-like_sf"/>
</dbReference>
<dbReference type="NCBIfam" id="TIGR00038">
    <property type="entry name" value="efp"/>
    <property type="match status" value="1"/>
</dbReference>
<dbReference type="NCBIfam" id="NF001810">
    <property type="entry name" value="PRK00529.1"/>
    <property type="match status" value="1"/>
</dbReference>
<dbReference type="PANTHER" id="PTHR30053">
    <property type="entry name" value="ELONGATION FACTOR P"/>
    <property type="match status" value="1"/>
</dbReference>
<dbReference type="PANTHER" id="PTHR30053:SF12">
    <property type="entry name" value="ELONGATION FACTOR P (EF-P) FAMILY PROTEIN"/>
    <property type="match status" value="1"/>
</dbReference>
<dbReference type="Pfam" id="PF01132">
    <property type="entry name" value="EFP"/>
    <property type="match status" value="1"/>
</dbReference>
<dbReference type="Pfam" id="PF08207">
    <property type="entry name" value="EFP_N"/>
    <property type="match status" value="1"/>
</dbReference>
<dbReference type="Pfam" id="PF09285">
    <property type="entry name" value="Elong-fact-P_C"/>
    <property type="match status" value="1"/>
</dbReference>
<dbReference type="PIRSF" id="PIRSF005901">
    <property type="entry name" value="EF-P"/>
    <property type="match status" value="1"/>
</dbReference>
<dbReference type="SMART" id="SM01185">
    <property type="entry name" value="EFP"/>
    <property type="match status" value="1"/>
</dbReference>
<dbReference type="SMART" id="SM00841">
    <property type="entry name" value="Elong-fact-P_C"/>
    <property type="match status" value="1"/>
</dbReference>
<dbReference type="SUPFAM" id="SSF50249">
    <property type="entry name" value="Nucleic acid-binding proteins"/>
    <property type="match status" value="2"/>
</dbReference>
<dbReference type="SUPFAM" id="SSF50104">
    <property type="entry name" value="Translation proteins SH3-like domain"/>
    <property type="match status" value="1"/>
</dbReference>
<dbReference type="PROSITE" id="PS01275">
    <property type="entry name" value="EFP"/>
    <property type="match status" value="1"/>
</dbReference>
<name>EFP_XANOM</name>
<organism>
    <name type="scientific">Xanthomonas oryzae pv. oryzae (strain MAFF 311018)</name>
    <dbReference type="NCBI Taxonomy" id="342109"/>
    <lineage>
        <taxon>Bacteria</taxon>
        <taxon>Pseudomonadati</taxon>
        <taxon>Pseudomonadota</taxon>
        <taxon>Gammaproteobacteria</taxon>
        <taxon>Lysobacterales</taxon>
        <taxon>Lysobacteraceae</taxon>
        <taxon>Xanthomonas</taxon>
    </lineage>
</organism>
<feature type="chain" id="PRO_1000010901" description="Elongation factor P">
    <location>
        <begin position="1"/>
        <end position="188"/>
    </location>
</feature>
<feature type="modified residue" description="N6-(3,6-diaminohexanoyl)-5-hydroxylysine" evidence="1">
    <location>
        <position position="34"/>
    </location>
</feature>
<gene>
    <name evidence="1" type="primary">efp</name>
    <name type="ordered locus">XOO2551</name>
</gene>
<sequence>MATVGMNDVKNGMKILVNNEPAVITETEYVKPGKGQAFTRMKYRFIKSGRVVEMTMKATDDVEVADVVDTDMRYLYSDGEYWHFMDPETFEQVQTDKAGMGGADKWLKGEEDCIVTLWNGAPIWVQPPNFVELKITETDPGVRGDTSGGGGKPATLETGAVVRVPLFVNQDEIIKVDTRSGEYSARVK</sequence>
<proteinExistence type="inferred from homology"/>
<reference key="1">
    <citation type="journal article" date="2005" name="Jpn. Agric. Res. Q.">
        <title>Genome sequence of Xanthomonas oryzae pv. oryzae suggests contribution of large numbers of effector genes and insertion sequences to its race diversity.</title>
        <authorList>
            <person name="Ochiai H."/>
            <person name="Inoue Y."/>
            <person name="Takeya M."/>
            <person name="Sasaki A."/>
            <person name="Kaku H."/>
        </authorList>
    </citation>
    <scope>NUCLEOTIDE SEQUENCE [LARGE SCALE GENOMIC DNA]</scope>
    <source>
        <strain>MAFF 311018</strain>
    </source>
</reference>
<evidence type="ECO:0000255" key="1">
    <source>
        <dbReference type="HAMAP-Rule" id="MF_00141"/>
    </source>
</evidence>